<reference key="1">
    <citation type="journal article" date="1983" name="J. Mol. Biol.">
        <title>Complete nucleotide sequence of bacteriophage T7 DNA and the locations of T7 genetic elements.</title>
        <authorList>
            <person name="Dunn J.J."/>
            <person name="Studier F.W."/>
        </authorList>
    </citation>
    <scope>NUCLEOTIDE SEQUENCE [LARGE SCALE GENOMIC DNA]</scope>
</reference>
<protein>
    <recommendedName>
        <fullName>Protein 7</fullName>
    </recommendedName>
    <alternativeName>
        <fullName>Gene product 7</fullName>
        <shortName>Gp7</shortName>
    </alternativeName>
</protein>
<organism>
    <name type="scientific">Escherichia phage T7</name>
    <name type="common">Bacteriophage T7</name>
    <dbReference type="NCBI Taxonomy" id="10760"/>
    <lineage>
        <taxon>Viruses</taxon>
        <taxon>Duplodnaviria</taxon>
        <taxon>Heunggongvirae</taxon>
        <taxon>Uroviricota</taxon>
        <taxon>Caudoviricetes</taxon>
        <taxon>Autographiviridae</taxon>
        <taxon>Studiervirinae</taxon>
        <taxon>Teseptimavirus</taxon>
        <taxon>Teseptimavirus T7</taxon>
    </lineage>
</organism>
<gene>
    <name type="ordered locus">7</name>
</gene>
<dbReference type="EMBL" id="V01146">
    <property type="protein sequence ID" value="CAA24422.1"/>
    <property type="molecule type" value="Genomic_DNA"/>
</dbReference>
<dbReference type="PIR" id="A04375">
    <property type="entry name" value="QSBPA7"/>
</dbReference>
<dbReference type="RefSeq" id="NP_041992.1">
    <property type="nucleotide sequence ID" value="NC_001604.1"/>
</dbReference>
<dbReference type="SMR" id="P03750"/>
<dbReference type="KEGG" id="vg:1261056"/>
<dbReference type="OrthoDB" id="12003at10239"/>
<dbReference type="Proteomes" id="UP000000840">
    <property type="component" value="Genome"/>
</dbReference>
<feature type="chain" id="PRO_0000106512" description="Protein 7">
    <location>
        <begin position="1"/>
        <end position="133"/>
    </location>
</feature>
<sequence>MSEFTCVEAKSRFRAIRWTVEHLGLPKGFEGHFVGYSLYVDEVMDMSGCREEYILDSTGKHVAYFAWCVSCDIHHKGDILDVTSVVINPEADSKGLQRFLAKRFKYLAELHDCDWVSRCKHEGETMRVYFKEV</sequence>
<name>Y7_BPT7</name>
<keyword id="KW-1185">Reference proteome</keyword>
<proteinExistence type="predicted"/>
<accession>P03750</accession>
<organismHost>
    <name type="scientific">Escherichia coli</name>
    <dbReference type="NCBI Taxonomy" id="562"/>
</organismHost>